<proteinExistence type="inferred from homology"/>
<comment type="function">
    <text evidence="1">DNA polymerase involved in damage-induced mutagenesis and translesion synthesis (TLS). It is not the major replicative DNA polymerase.</text>
</comment>
<comment type="catalytic activity">
    <reaction evidence="1">
        <text>DNA(n) + a 2'-deoxyribonucleoside 5'-triphosphate = DNA(n+1) + diphosphate</text>
        <dbReference type="Rhea" id="RHEA:22508"/>
        <dbReference type="Rhea" id="RHEA-COMP:17339"/>
        <dbReference type="Rhea" id="RHEA-COMP:17340"/>
        <dbReference type="ChEBI" id="CHEBI:33019"/>
        <dbReference type="ChEBI" id="CHEBI:61560"/>
        <dbReference type="ChEBI" id="CHEBI:173112"/>
        <dbReference type="EC" id="2.7.7.7"/>
    </reaction>
</comment>
<comment type="subcellular location">
    <subcellularLocation>
        <location evidence="1">Cytoplasm</location>
    </subcellularLocation>
</comment>
<comment type="similarity">
    <text evidence="1">Belongs to the DNA polymerase type-C family. DnaE2 subfamily.</text>
</comment>
<dbReference type="EC" id="2.7.7.7" evidence="1"/>
<dbReference type="EMBL" id="CP000789">
    <property type="protein sequence ID" value="ABU71821.1"/>
    <property type="molecule type" value="Genomic_DNA"/>
</dbReference>
<dbReference type="RefSeq" id="WP_012128430.1">
    <property type="nucleotide sequence ID" value="NC_009783.1"/>
</dbReference>
<dbReference type="SMR" id="A7MUN4"/>
<dbReference type="KEGG" id="vha:VIBHAR_02868"/>
<dbReference type="PATRIC" id="fig|338187.25.peg.3317"/>
<dbReference type="Proteomes" id="UP000008152">
    <property type="component" value="Chromosome I"/>
</dbReference>
<dbReference type="GO" id="GO:0005737">
    <property type="term" value="C:cytoplasm"/>
    <property type="evidence" value="ECO:0007669"/>
    <property type="project" value="UniProtKB-SubCell"/>
</dbReference>
<dbReference type="GO" id="GO:0008408">
    <property type="term" value="F:3'-5' exonuclease activity"/>
    <property type="evidence" value="ECO:0007669"/>
    <property type="project" value="InterPro"/>
</dbReference>
<dbReference type="GO" id="GO:0003887">
    <property type="term" value="F:DNA-directed DNA polymerase activity"/>
    <property type="evidence" value="ECO:0007669"/>
    <property type="project" value="UniProtKB-UniRule"/>
</dbReference>
<dbReference type="GO" id="GO:0003676">
    <property type="term" value="F:nucleic acid binding"/>
    <property type="evidence" value="ECO:0007669"/>
    <property type="project" value="InterPro"/>
</dbReference>
<dbReference type="GO" id="GO:0006281">
    <property type="term" value="P:DNA repair"/>
    <property type="evidence" value="ECO:0007669"/>
    <property type="project" value="UniProtKB-UniRule"/>
</dbReference>
<dbReference type="GO" id="GO:0006260">
    <property type="term" value="P:DNA replication"/>
    <property type="evidence" value="ECO:0007669"/>
    <property type="project" value="UniProtKB-KW"/>
</dbReference>
<dbReference type="CDD" id="cd04485">
    <property type="entry name" value="DnaE_OBF"/>
    <property type="match status" value="1"/>
</dbReference>
<dbReference type="CDD" id="cd07434">
    <property type="entry name" value="PHP_PolIIIA_DnaE2"/>
    <property type="match status" value="1"/>
</dbReference>
<dbReference type="Gene3D" id="1.10.150.870">
    <property type="match status" value="1"/>
</dbReference>
<dbReference type="Gene3D" id="3.20.20.140">
    <property type="entry name" value="Metal-dependent hydrolases"/>
    <property type="match status" value="1"/>
</dbReference>
<dbReference type="Gene3D" id="2.40.50.140">
    <property type="entry name" value="Nucleic acid-binding proteins"/>
    <property type="match status" value="1"/>
</dbReference>
<dbReference type="HAMAP" id="MF_01902">
    <property type="entry name" value="DNApol_error_prone"/>
    <property type="match status" value="1"/>
</dbReference>
<dbReference type="InterPro" id="IPR011708">
    <property type="entry name" value="DNA_pol3_alpha_NTPase_dom"/>
</dbReference>
<dbReference type="InterPro" id="IPR040982">
    <property type="entry name" value="DNA_pol3_finger"/>
</dbReference>
<dbReference type="InterPro" id="IPR023073">
    <property type="entry name" value="DnaE2"/>
</dbReference>
<dbReference type="InterPro" id="IPR004805">
    <property type="entry name" value="DnaE2/DnaE/PolC"/>
</dbReference>
<dbReference type="InterPro" id="IPR029460">
    <property type="entry name" value="DNAPol_HHH"/>
</dbReference>
<dbReference type="InterPro" id="IPR012340">
    <property type="entry name" value="NA-bd_OB-fold"/>
</dbReference>
<dbReference type="InterPro" id="IPR004365">
    <property type="entry name" value="NA-bd_OB_tRNA"/>
</dbReference>
<dbReference type="InterPro" id="IPR004013">
    <property type="entry name" value="PHP_dom"/>
</dbReference>
<dbReference type="InterPro" id="IPR003141">
    <property type="entry name" value="Pol/His_phosphatase_N"/>
</dbReference>
<dbReference type="NCBIfam" id="TIGR00594">
    <property type="entry name" value="polc"/>
    <property type="match status" value="1"/>
</dbReference>
<dbReference type="NCBIfam" id="NF004225">
    <property type="entry name" value="PRK05672.1"/>
    <property type="match status" value="1"/>
</dbReference>
<dbReference type="PANTHER" id="PTHR32294">
    <property type="entry name" value="DNA POLYMERASE III SUBUNIT ALPHA"/>
    <property type="match status" value="1"/>
</dbReference>
<dbReference type="PANTHER" id="PTHR32294:SF4">
    <property type="entry name" value="ERROR-PRONE DNA POLYMERASE"/>
    <property type="match status" value="1"/>
</dbReference>
<dbReference type="Pfam" id="PF07733">
    <property type="entry name" value="DNA_pol3_alpha"/>
    <property type="match status" value="1"/>
</dbReference>
<dbReference type="Pfam" id="PF17657">
    <property type="entry name" value="DNA_pol3_finger"/>
    <property type="match status" value="1"/>
</dbReference>
<dbReference type="Pfam" id="PF14579">
    <property type="entry name" value="HHH_6"/>
    <property type="match status" value="1"/>
</dbReference>
<dbReference type="Pfam" id="PF02811">
    <property type="entry name" value="PHP"/>
    <property type="match status" value="1"/>
</dbReference>
<dbReference type="Pfam" id="PF01336">
    <property type="entry name" value="tRNA_anti-codon"/>
    <property type="match status" value="1"/>
</dbReference>
<dbReference type="SMART" id="SM00481">
    <property type="entry name" value="POLIIIAc"/>
    <property type="match status" value="1"/>
</dbReference>
<feature type="chain" id="PRO_1000073692" description="Error-prone DNA polymerase">
    <location>
        <begin position="1"/>
        <end position="1024"/>
    </location>
</feature>
<reference key="1">
    <citation type="submission" date="2007-08" db="EMBL/GenBank/DDBJ databases">
        <authorList>
            <consortium name="The Vibrio harveyi Genome Sequencing Project"/>
            <person name="Bassler B."/>
            <person name="Clifton S.W."/>
            <person name="Fulton L."/>
            <person name="Delehaunty K."/>
            <person name="Fronick C."/>
            <person name="Harrison M."/>
            <person name="Markivic C."/>
            <person name="Fulton R."/>
            <person name="Tin-Wollam A.-M."/>
            <person name="Shah N."/>
            <person name="Pepin K."/>
            <person name="Nash W."/>
            <person name="Thiruvilangam P."/>
            <person name="Bhonagiri V."/>
            <person name="Waters C."/>
            <person name="Tu K.C."/>
            <person name="Irgon J."/>
            <person name="Wilson R.K."/>
        </authorList>
    </citation>
    <scope>NUCLEOTIDE SEQUENCE [LARGE SCALE GENOMIC DNA]</scope>
    <source>
        <strain>ATCC BAA-1116 / BB120</strain>
    </source>
</reference>
<gene>
    <name evidence="1" type="primary">dnaE2</name>
    <name type="ordered locus">VIBHAR_02868</name>
</gene>
<evidence type="ECO:0000255" key="1">
    <source>
        <dbReference type="HAMAP-Rule" id="MF_01902"/>
    </source>
</evidence>
<name>DNAE2_VIBC1</name>
<accession>A7MUN4</accession>
<sequence length="1024" mass="116906">MSYAELFCQSNFSFLTGASHAEELVLQAAFYRYQAIAITDECSVAGVVKAHATIEQHKLDIKQIVGSMFWLNDECQVVLLCPCRKAYAELCRIITNARRRSEKGSYQLSEWDLMSVRHCFVLWLPTHQESDHYWGRWLQQHHAHRLWVAIQRHLGGDDDAYTTHCELLANEFQLPIAACGGVLMHAVERLPLQHVLTAVKHGCSVDKLGFSRLSNAERALRPLNKLSRIYKSKWLEESTHIADLCEFKLSDLKYEYPTELIPNGYTPTSYLRMLVERGKKLRFPEGIPADIHQTIENELALIEELEYHYYFLTIHDIVMFAKQQGILYQGRGSAANSVVCYCLEITAVDPRQISVLFERFISREREEPPDIDVDFEHERREEVIQYIYKKYGRERAALAATVISYRFKSAVREVGKALGIEETQLDFFIKNVNRRDRTQGWQAQIIELGLQPESLKGQQFIQLVNEITGFPRHLSQHVGGFVISSGPLYELVPVENASMEDRTIIQWDKDDLESLKLLKVDVLALGMLNAIRKCFQLVEKHHQRSLSIAEITRLQDDPHVYRMIQKADTVGVFQIESRAQMSMLPRLKPARYYDLVVQIAIARPGPIQGDMVHPFLKRRNGEEPISYPSEEVKSVLERTMGVPIFQEQVIKLAMVAAGFSGGEADQLRRAMAAWKKNGDLAKFKPKLIDGMRERGYDLEFAERIFDQICGFGEYGFPESHSASFAVLAYCSAWLKFYYPAEFYTALLNSQPMGFYSPSQLIQDARRHGVEVLPVCINHSSYQHHLVQRPNGRLGVQLGFRLVKGFNQESASRLVERRPSTGYRAIQEVKQILRNRRDIELLASADAFQILSGNRYNARWAAMDSLSDLPLFNHIEEPMANYQAQPSEYENLIEDYASTGLSLSRHPITLLEEAGKLPRFTRMKQLVEKEHNSLVTVIGVVTGRQSPGTAAGVTFFTLEDDTGNINVVVWRATARAQKQAYLTSKVLMVKGILEREGEVTHVIAGKLIDCTHNLAELKSKSRDFH</sequence>
<protein>
    <recommendedName>
        <fullName evidence="1">Error-prone DNA polymerase</fullName>
        <ecNumber evidence="1">2.7.7.7</ecNumber>
    </recommendedName>
</protein>
<keyword id="KW-0963">Cytoplasm</keyword>
<keyword id="KW-0227">DNA damage</keyword>
<keyword id="KW-0234">DNA repair</keyword>
<keyword id="KW-0235">DNA replication</keyword>
<keyword id="KW-0239">DNA-directed DNA polymerase</keyword>
<keyword id="KW-0548">Nucleotidyltransferase</keyword>
<keyword id="KW-0808">Transferase</keyword>
<organism>
    <name type="scientific">Vibrio campbellii (strain ATCC BAA-1116)</name>
    <dbReference type="NCBI Taxonomy" id="2902295"/>
    <lineage>
        <taxon>Bacteria</taxon>
        <taxon>Pseudomonadati</taxon>
        <taxon>Pseudomonadota</taxon>
        <taxon>Gammaproteobacteria</taxon>
        <taxon>Vibrionales</taxon>
        <taxon>Vibrionaceae</taxon>
        <taxon>Vibrio</taxon>
    </lineage>
</organism>